<feature type="signal peptide" evidence="4 5">
    <location>
        <begin position="1"/>
        <end position="24"/>
    </location>
</feature>
<feature type="chain" id="PRO_0000444300" description="Major S-layer protein">
    <location>
        <begin position="25"/>
        <end position="669"/>
    </location>
</feature>
<feature type="transmembrane region" description="Helical" evidence="1">
    <location>
        <begin position="645"/>
        <end position="665"/>
    </location>
</feature>
<feature type="region of interest" description="Disordered" evidence="3">
    <location>
        <begin position="588"/>
        <end position="648"/>
    </location>
</feature>
<feature type="compositionally biased region" description="Acidic residues" evidence="3">
    <location>
        <begin position="590"/>
        <end position="627"/>
    </location>
</feature>
<feature type="glycosylation site" description="N-linked (GlcNAc...) asparagine" evidence="2">
    <location>
        <position position="36"/>
    </location>
</feature>
<feature type="glycosylation site" description="N-linked (GlcNAc...) asparagine" evidence="2">
    <location>
        <position position="70"/>
    </location>
</feature>
<feature type="glycosylation site" description="N-linked (GlcNAc...) asparagine" evidence="2">
    <location>
        <position position="116"/>
    </location>
</feature>
<feature type="glycosylation site" description="N-linked (GlcNAc...) asparagine" evidence="2">
    <location>
        <position position="600"/>
    </location>
</feature>
<feature type="glycosylation site" description="N-linked (GlcNAc...) asparagine" evidence="2">
    <location>
        <position position="607"/>
    </location>
</feature>
<name>CSG_METMA</name>
<protein>
    <recommendedName>
        <fullName evidence="6">Major S-layer protein</fullName>
    </recommendedName>
    <alternativeName>
        <fullName evidence="6">Cell surface glycoprotein</fullName>
    </alternativeName>
</protein>
<accession>Q8PVI7</accession>
<dbReference type="EMBL" id="AE008384">
    <property type="protein sequence ID" value="AAM31672.1"/>
    <property type="molecule type" value="Genomic_DNA"/>
</dbReference>
<dbReference type="RefSeq" id="WP_011033908.1">
    <property type="nucleotide sequence ID" value="NC_003901.1"/>
</dbReference>
<dbReference type="SMR" id="Q8PVI7"/>
<dbReference type="DNASU" id="1480318"/>
<dbReference type="KEGG" id="mma:MM_1976"/>
<dbReference type="PATRIC" id="fig|192952.21.peg.2277"/>
<dbReference type="eggNOG" id="arCOG03259">
    <property type="taxonomic scope" value="Archaea"/>
</dbReference>
<dbReference type="HOGENOM" id="CLU_014690_0_0_2"/>
<dbReference type="Proteomes" id="UP000000595">
    <property type="component" value="Chromosome"/>
</dbReference>
<dbReference type="GO" id="GO:0005576">
    <property type="term" value="C:extracellular region"/>
    <property type="evidence" value="ECO:0007669"/>
    <property type="project" value="UniProtKB-KW"/>
</dbReference>
<dbReference type="GO" id="GO:0005886">
    <property type="term" value="C:plasma membrane"/>
    <property type="evidence" value="ECO:0007669"/>
    <property type="project" value="UniProtKB-SubCell"/>
</dbReference>
<dbReference type="GO" id="GO:0030115">
    <property type="term" value="C:S-layer"/>
    <property type="evidence" value="ECO:0007669"/>
    <property type="project" value="UniProtKB-SubCell"/>
</dbReference>
<dbReference type="GO" id="GO:0071555">
    <property type="term" value="P:cell wall organization"/>
    <property type="evidence" value="ECO:0007669"/>
    <property type="project" value="UniProtKB-KW"/>
</dbReference>
<dbReference type="Gene3D" id="2.60.40.4190">
    <property type="match status" value="2"/>
</dbReference>
<dbReference type="Gene3D" id="2.60.98.40">
    <property type="match status" value="2"/>
</dbReference>
<dbReference type="InterPro" id="IPR026371">
    <property type="entry name" value="PGF_CTERM"/>
</dbReference>
<dbReference type="InterPro" id="IPR006457">
    <property type="entry name" value="S_layer-rel_Mac"/>
</dbReference>
<dbReference type="NCBIfam" id="TIGR04126">
    <property type="entry name" value="PGF_CTERM"/>
    <property type="match status" value="1"/>
</dbReference>
<dbReference type="NCBIfam" id="TIGR01567">
    <property type="entry name" value="S_layer_rel_Mac"/>
    <property type="match status" value="2"/>
</dbReference>
<dbReference type="Pfam" id="PF18204">
    <property type="entry name" value="PGF-CTERM"/>
    <property type="match status" value="1"/>
</dbReference>
<dbReference type="Pfam" id="PF07752">
    <property type="entry name" value="S-layer"/>
    <property type="match status" value="2"/>
</dbReference>
<reference key="1">
    <citation type="journal article" date="2002" name="J. Mol. Microbiol. Biotechnol.">
        <title>The genome of Methanosarcina mazei: evidence for lateral gene transfer between Bacteria and Archaea.</title>
        <authorList>
            <person name="Deppenmeier U."/>
            <person name="Johann A."/>
            <person name="Hartsch T."/>
            <person name="Merkl R."/>
            <person name="Schmitz R.A."/>
            <person name="Martinez-Arias R."/>
            <person name="Henne A."/>
            <person name="Wiezer A."/>
            <person name="Baeumer S."/>
            <person name="Jacobi C."/>
            <person name="Brueggemann H."/>
            <person name="Lienard T."/>
            <person name="Christmann A."/>
            <person name="Boemecke M."/>
            <person name="Steckel S."/>
            <person name="Bhattacharyya A."/>
            <person name="Lykidis A."/>
            <person name="Overbeek R."/>
            <person name="Klenk H.-P."/>
            <person name="Gunsalus R.P."/>
            <person name="Fritz H.-J."/>
            <person name="Gottschalk G."/>
        </authorList>
    </citation>
    <scope>NUCLEOTIDE SEQUENCE [LARGE SCALE GENOMIC DNA]</scope>
    <source>
        <strain>ATCC BAA-159 / DSM 3647 / Goe1 / Go1 / JCM 11833 / OCM 88</strain>
    </source>
</reference>
<reference key="2">
    <citation type="journal article" date="2009" name="J. Proteome Res.">
        <title>S-layer, surface-accessible, and concanavalin A binding proteins of Methanosarcina acetivorans and Methanosarcina mazei.</title>
        <authorList>
            <person name="Francoleon D.R."/>
            <person name="Boontheung P."/>
            <person name="Yang Y."/>
            <person name="Kin U."/>
            <person name="Ytterberg A.J."/>
            <person name="Denny P.A."/>
            <person name="Denny P.C."/>
            <person name="Loo J.A."/>
            <person name="Gunsalus R.P."/>
            <person name="Loo R.R."/>
        </authorList>
    </citation>
    <scope>IDENTIFICATION BY MASS SPECTROMETRY</scope>
    <scope>SIGNAL PEPTIDE</scope>
    <scope>FUNCTION</scope>
    <scope>SUBCELLULAR LOCATION</scope>
    <scope>GLYCOSYLATION</scope>
    <source>
        <strain>ATCC BAA-159 / DSM 3647 / Goe1 / Go1 / JCM 11833 / OCM 88</strain>
    </source>
</reference>
<reference key="3">
    <citation type="journal article" date="2015" name="Front. Microbiol.">
        <title>Mining proteomic data to expose protein modifications in Methanosarcina mazei strain Goe1.</title>
        <authorList>
            <person name="Leon D.R."/>
            <person name="Ytterberg A.J."/>
            <person name="Boontheung P."/>
            <person name="Kim U."/>
            <person name="Loo J.A."/>
            <person name="Gunsalus R.P."/>
            <person name="Ogorzalek Loo R.R."/>
        </authorList>
    </citation>
    <scope>IDENTIFICATION BY MASS SPECTROMETRY</scope>
    <scope>SIGNAL PEPTIDE</scope>
    <source>
        <strain>ATCC BAA-159 / DSM 3647 / Goe1 / Go1 / JCM 11833 / OCM 88</strain>
    </source>
</reference>
<sequence length="669" mass="74054">MKRFAAVSLAALMLLTVFASAASAADVIEIRGPVYNGSDINDIIDTYGENNALTIDATKFAAFYYDIDDNVTTETLSILAVPGTEGNVIGEGGIVYETTIQQVDYEFYRPAAGWSNYSLIGFFAEKYIPINPDKADKLAKLVLDSDDKYTIRTGEQLDLGEGYSIEAKQVDVDGEKVWLEFTKDGEFVDDEIISVVSGSDNTWEVELDDIQDEDDVVVLRVHVNQVFQGAVDSIAQIEGLWLIDYTNAMKIESDDEFGNLDNVKINGDTLTITNEDTFTLTRDDEEEIAEGLFFKTADDTRALRFYAMKQITEPGTYEIRGEVAEGDFSWDATNFAGFFYDVNDDVSTESLTVTGLNGGNVIPEGGLVYETTIQMVDYEYSKPSVGWDQFPVLGFFAEEYIPINADKADKLAKLVLDSDDKYTIRTGEQLDLGEGYAIEAKQVDVDGEKVWLEFTKDGEFVDDEIISVVSGSDNTWEVELDDIQDEDDVVVLRVHVNQVFQGAVDSIAQIEGIWLIDYANAMKIESDDEFGDLDNVKINGATLTITNEDTFTLTRDDEVEIGQGMFFKVADTAASDLRYYPFVEKTIDGEVVDDDEDDDNVTEPVDNDTEVEEPTEEPTEGPTEEPTEGPTTEEPTEEPTEADGTTPGFGVVLGLVGLLAVVYLVRRNN</sequence>
<keyword id="KW-1003">Cell membrane</keyword>
<keyword id="KW-0134">Cell wall</keyword>
<keyword id="KW-0961">Cell wall biogenesis/degradation</keyword>
<keyword id="KW-0325">Glycoprotein</keyword>
<keyword id="KW-0472">Membrane</keyword>
<keyword id="KW-0701">S-layer</keyword>
<keyword id="KW-0964">Secreted</keyword>
<keyword id="KW-0732">Signal</keyword>
<keyword id="KW-0812">Transmembrane</keyword>
<keyword id="KW-1133">Transmembrane helix</keyword>
<proteinExistence type="evidence at protein level"/>
<gene>
    <name evidence="7" type="ordered locus">MM_1976</name>
</gene>
<organism>
    <name type="scientific">Methanosarcina mazei (strain ATCC BAA-159 / DSM 3647 / Goe1 / Go1 / JCM 11833 / OCM 88)</name>
    <name type="common">Methanosarcina frisia</name>
    <dbReference type="NCBI Taxonomy" id="192952"/>
    <lineage>
        <taxon>Archaea</taxon>
        <taxon>Methanobacteriati</taxon>
        <taxon>Methanobacteriota</taxon>
        <taxon>Stenosarchaea group</taxon>
        <taxon>Methanomicrobia</taxon>
        <taxon>Methanosarcinales</taxon>
        <taxon>Methanosarcinaceae</taxon>
        <taxon>Methanosarcina</taxon>
    </lineage>
</organism>
<comment type="function">
    <text evidence="4">S-layer protein. The S-layer is a paracrystalline mono-layered assembly of proteins which coat the surface of the cell.</text>
</comment>
<comment type="subcellular location">
    <subcellularLocation>
        <location evidence="4">Secreted</location>
        <location evidence="4">Cell wall</location>
        <location evidence="4">S-layer</location>
    </subcellularLocation>
    <subcellularLocation>
        <location evidence="6">Cell membrane</location>
    </subcellularLocation>
</comment>
<comment type="PTM">
    <text evidence="4">Glycosylated.</text>
</comment>
<comment type="similarity">
    <text evidence="6">Belongs to the Methanosarcinales S-layer protein family.</text>
</comment>
<evidence type="ECO:0000255" key="1"/>
<evidence type="ECO:0000255" key="2">
    <source>
        <dbReference type="PROSITE-ProRule" id="PRU00498"/>
    </source>
</evidence>
<evidence type="ECO:0000256" key="3">
    <source>
        <dbReference type="SAM" id="MobiDB-lite"/>
    </source>
</evidence>
<evidence type="ECO:0000269" key="4">
    <source>
    </source>
</evidence>
<evidence type="ECO:0000269" key="5">
    <source>
    </source>
</evidence>
<evidence type="ECO:0000305" key="6"/>
<evidence type="ECO:0000312" key="7">
    <source>
        <dbReference type="EMBL" id="AAM31672.1"/>
    </source>
</evidence>